<gene>
    <name type="ORF">ORF2</name>
</gene>
<accession>Q82446</accession>
<sequence>MASKSDKQVTVEVNNNGRNRSKSRARSQSRGRGRSVKITVNSHNKGRRQNGRNKYQSNQRVRKIVNKQLRKQGVTGPKPAICQRATATLGTIGTNTTGATEIEACILLNPVLVKDATGSTQFGPVQALGAQYSMWKLKYLNVKLTSMVGASAVNGTVLRISLNPTSTPSSTSWSGLGARKHMDVTVGRNAVFKLRPSDLGGPRDGWWLTNTNDNASDTLGPSIEIHTLGKTMSSYKNEQFTGGLFLVELASEWCFTGYAANPNLVNLVKSTDHEVNVTFEGSKGTPLIMNVAEHSHFARMAEQHSSISTTFSRAGGDATSDTVWQVLNTAVSAAELVAPPPFNWLIKGGWWFVKLIAGRTRTGTKQFYVYPSYQDALSNKPALCTGGVTGGVLRTTPVTTLQFTQMNQPSLGHGEHTATIGSIVQDPSGELRVLLTVGSIMSPNSADRQVWLNKTLTAPGTNSNDNLVKIAHDLGHYLIMQGFMHIKTVEWYTPDFQPSRDPTPIAGMSVMVNITKKADVYFMKQFKNSYTNNRHQITSIFLIKPLADFKVQCYMSYFKRESHDNDGVANLTVRSMTSPETIRFQVGEWYLLTSTTLKENNLPEGWVWDRVELKSDTPYYADQALTYFITPPPVDSQILFEGNTTLPRISSPPDNPSGRYMESHQQDCDSSDDEDDCENVSEETETEDEEDEDEDDEADRFDLHSPYSSEPEDSDENNRVTLLSTLINQGMTVERATRITKRAFPTCAEKLKRSVYMDLLASGASPSSAWSNACDEARNVGSNQLAKLSGDRGHAE</sequence>
<name>CAPSD_HASV2</name>
<organism>
    <name type="scientific">Human astrovirus-2</name>
    <name type="common">HAstV-2</name>
    <dbReference type="NCBI Taxonomy" id="12701"/>
    <lineage>
        <taxon>Viruses</taxon>
        <taxon>Riboviria</taxon>
        <taxon>Orthornavirae</taxon>
        <taxon>Pisuviricota</taxon>
        <taxon>Stelpaviricetes</taxon>
        <taxon>Stellavirales</taxon>
        <taxon>Astroviridae</taxon>
        <taxon>Mamastrovirus</taxon>
        <taxon>Mamastrovirus 1</taxon>
    </lineage>
</organism>
<comment type="function">
    <molecule>Capsid polyprotein VP90</molecule>
    <text evidence="2">The capsid polyprotein VP90 self-assembles and undergoes a proteolytic cleavage by host caspases to yield the immature VP70 virion.</text>
</comment>
<comment type="function">
    <molecule>Capsid polyprotein VP70</molecule>
    <text evidence="2">The immature virion is composed of 180 VP70 subunits with 90 dimeric spikes and displays a T=3 icosahedral symmetry (By similarity). During maturation, VP70 undergoes a loss of 60 peripentonal spikes, which likely plays an important role in viral infectivity (By similarity).</text>
</comment>
<comment type="function">
    <molecule>Core protein VP34</molecule>
    <text evidence="1">Self-assembles to form an icosahedral capsid with a T=3 symmetry, about 43 nm in diameter (By similarity). This forms contains only 30 spikes located on the icosahedral 2-fold axes (By similarity).</text>
</comment>
<comment type="function">
    <molecule>Spike protein VP27</molecule>
    <text evidence="1 2">VP25 and VP27 Forms the spikes at the surface of the virion (By similarity). This forms contains only 30 spikes located on the icosahedral 2-fold axes (By similarity). Plays a role in the attachment to target host cell (By similarity). This attachment induces virion internalization through clathrin-dependent endocytosis (By similarity).</text>
</comment>
<comment type="function">
    <molecule>Spike protein VP25</molecule>
    <text evidence="1 2 5">VP25 and VP27 Forms the spikes at the surface of the virion (By similarity). This forms contains only 30 spikes located on the icosahedral 2-fold axes (By similarity). Plays a role in the attachment to target host cell (PubMed:33396308). This attachment induces virion internalization through clathrin-dependent endocytosis (By similarity).</text>
</comment>
<comment type="subunit">
    <molecule>Spike protein VP25</molecule>
    <text evidence="2 5">Heterodimer with spike protein VP27 (By similarity). The spikes form a globular dimer with 30 spikes covering the mature virion (By similarity). Spike protein VP25 that lacks the core attachment region may need to dimerize with spike protein VP27 to remain stably bound to the viral particle (By similarity). Does not interact with host PDIA4 during virus entry as it is the case for other strains (PubMed:33396308).</text>
</comment>
<comment type="subunit">
    <molecule>Spike protein VP27</molecule>
    <text evidence="2">Heterodimer with spike protein VP25 (By similarity). The spikes form a globular dimer with 30 spikes covering the mature virion (By similarity). Spike protein VP25 that lacks the core attachment region may need to dimerize with spike protein VP27 to remain stably bound to the viral particle (By similarity).</text>
</comment>
<comment type="subcellular location">
    <molecule>Capsid polyprotein VP90</molecule>
    <subcellularLocation>
        <location evidence="2">Virion</location>
    </subcellularLocation>
    <text evidence="2">Immature capsid.</text>
</comment>
<comment type="subcellular location">
    <molecule>Capsid polyprotein VP70</molecule>
    <subcellularLocation>
        <location evidence="2">Virion</location>
    </subcellularLocation>
    <text evidence="2">Immature capsid after cleavage by host caspases.</text>
</comment>
<comment type="subcellular location">
    <molecule>Core protein VP34</molecule>
    <subcellularLocation>
        <location evidence="1">Virion</location>
    </subcellularLocation>
    <text evidence="1">Capsid.</text>
</comment>
<comment type="subcellular location">
    <molecule>Spike protein VP27</molecule>
    <subcellularLocation>
        <location evidence="1">Virion</location>
    </subcellularLocation>
    <text evidence="1">Capsid.</text>
</comment>
<comment type="subcellular location">
    <molecule>Spike protein VP25</molecule>
    <subcellularLocation>
        <location evidence="1">Host extracellular space</location>
    </subcellularLocation>
    <subcellularLocation>
        <location>Virion</location>
    </subcellularLocation>
    <text evidence="1 7">Capsid (By similarity). Spike protein VP25 that lacks the core attachment region may need to dimerize with spike protein VP27 to remain stably bound to the viral particle (Probable).</text>
</comment>
<comment type="domain">
    <molecule>Capsid polyprotein VP70</molecule>
    <text evidence="6">Contains a lipid disrupting region that is exposed after trypsin treatment.</text>
</comment>
<comment type="domain">
    <molecule>Spike protein VP27</molecule>
    <text evidence="2">Contains the core attachment region and the P2 globular region.</text>
</comment>
<comment type="domain">
    <molecule>Spike protein VP25</molecule>
    <text evidence="2">Contains the P2 globular region (By similarity). The core attachment region is lost by cleavage (By similarity).</text>
</comment>
<comment type="PTM">
    <molecule>Capsid polyprotein VP90</molecule>
    <text evidence="2">Specific enzymatic cleavages by the host yield mature proteins. VP90 acidic C-terminal domain is eliminated from the immature virion by host caspases during viral maturation giving rise to virions composed of VP70 (By similarity). The virus can then dissociate from cellular membranes and exit the cell (By similarity). Further cleavages by host extracellular proteases occur resulting in the three structural proteins VP34, VP27 and VP25 and conferring infectivity (By similarity).</text>
</comment>
<proteinExistence type="evidence at protein level"/>
<feature type="chain" id="PRO_0000320232" description="Capsid polyprotein VP90">
    <location>
        <begin position="1"/>
        <end position="796"/>
    </location>
</feature>
<feature type="chain" id="PRO_0000419558" description="Capsid polyprotein VP70" evidence="3">
    <location>
        <begin position="1"/>
        <end position="654"/>
    </location>
</feature>
<feature type="chain" id="PRO_0000419559" description="Core protein VP34" evidence="3">
    <location>
        <begin position="1"/>
        <end position="313"/>
    </location>
</feature>
<feature type="chain" id="PRO_0000419560" description="Spike protein VP27" evidence="3">
    <location>
        <begin position="395"/>
        <end position="650"/>
    </location>
</feature>
<feature type="chain" id="PRO_0000419561" description="Spike protein VP25" evidence="3">
    <location>
        <begin position="423"/>
        <end position="650"/>
    </location>
</feature>
<feature type="region of interest" description="Basic" evidence="2">
    <location>
        <begin position="1"/>
        <end position="70"/>
    </location>
</feature>
<feature type="region of interest" description="Disordered" evidence="4">
    <location>
        <begin position="1"/>
        <end position="59"/>
    </location>
</feature>
<feature type="region of interest" description="Inner core" evidence="2">
    <location>
        <begin position="71"/>
        <end position="263"/>
    </location>
</feature>
<feature type="region of interest" description="Lipid disruption activity" evidence="8">
    <location>
        <begin position="274"/>
        <end position="313"/>
    </location>
</feature>
<feature type="region of interest" description="Core attachment" evidence="2">
    <location>
        <begin position="395"/>
        <end position="422"/>
    </location>
</feature>
<feature type="region of interest" description="P2 globular domain" evidence="2">
    <location>
        <begin position="423"/>
        <end position="650"/>
    </location>
</feature>
<feature type="region of interest" description="Disordered" evidence="4">
    <location>
        <begin position="644"/>
        <end position="718"/>
    </location>
</feature>
<feature type="region of interest" description="Acidic" evidence="2">
    <location>
        <begin position="651"/>
        <end position="796"/>
    </location>
</feature>
<feature type="compositionally biased region" description="Basic residues" evidence="4">
    <location>
        <begin position="19"/>
        <end position="35"/>
    </location>
</feature>
<feature type="compositionally biased region" description="Acidic residues" evidence="4">
    <location>
        <begin position="669"/>
        <end position="699"/>
    </location>
</feature>
<feature type="site" description="Cleavage" evidence="2">
    <location>
        <begin position="313"/>
        <end position="314"/>
    </location>
</feature>
<feature type="site" description="Cleavage" evidence="2">
    <location>
        <begin position="394"/>
        <end position="395"/>
    </location>
</feature>
<feature type="site" description="Cleavage" evidence="2">
    <location>
        <begin position="422"/>
        <end position="423"/>
    </location>
</feature>
<feature type="site" description="Cleavage" evidence="2">
    <location>
        <begin position="650"/>
        <end position="651"/>
    </location>
</feature>
<feature type="site" description="Cleavage" evidence="3">
    <location>
        <begin position="654"/>
        <end position="655"/>
    </location>
</feature>
<feature type="strand" evidence="11">
    <location>
        <begin position="430"/>
        <end position="437"/>
    </location>
</feature>
<feature type="strand" evidence="11">
    <location>
        <begin position="460"/>
        <end position="462"/>
    </location>
</feature>
<feature type="helix" evidence="11">
    <location>
        <begin position="463"/>
        <end position="466"/>
    </location>
</feature>
<feature type="strand" evidence="11">
    <location>
        <begin position="469"/>
        <end position="472"/>
    </location>
</feature>
<feature type="strand" evidence="11">
    <location>
        <begin position="477"/>
        <end position="479"/>
    </location>
</feature>
<feature type="strand" evidence="11">
    <location>
        <begin position="482"/>
        <end position="492"/>
    </location>
</feature>
<feature type="strand" evidence="11">
    <location>
        <begin position="508"/>
        <end position="512"/>
    </location>
</feature>
<feature type="strand" evidence="11">
    <location>
        <begin position="515"/>
        <end position="530"/>
    </location>
</feature>
<feature type="turn" evidence="11">
    <location>
        <begin position="531"/>
        <end position="533"/>
    </location>
</feature>
<feature type="strand" evidence="11">
    <location>
        <begin position="534"/>
        <end position="547"/>
    </location>
</feature>
<feature type="strand" evidence="11">
    <location>
        <begin position="549"/>
        <end position="556"/>
    </location>
</feature>
<feature type="strand" evidence="11">
    <location>
        <begin position="558"/>
        <end position="560"/>
    </location>
</feature>
<feature type="strand" evidence="11">
    <location>
        <begin position="564"/>
        <end position="567"/>
    </location>
</feature>
<feature type="strand" evidence="11">
    <location>
        <begin position="571"/>
        <end position="573"/>
    </location>
</feature>
<feature type="strand" evidence="11">
    <location>
        <begin position="578"/>
        <end position="584"/>
    </location>
</feature>
<feature type="strand" evidence="11">
    <location>
        <begin position="589"/>
        <end position="601"/>
    </location>
</feature>
<feature type="helix" evidence="11">
    <location>
        <begin position="625"/>
        <end position="627"/>
    </location>
</feature>
<feature type="strand" evidence="11">
    <location>
        <begin position="628"/>
        <end position="630"/>
    </location>
</feature>
<feature type="strand" evidence="11">
    <location>
        <begin position="637"/>
        <end position="643"/>
    </location>
</feature>
<reference key="1">
    <citation type="journal article" date="1993" name="J. Virol.">
        <title>Subgenomic RNA sequence of human astrovirus supports classification of Astroviridae as a new family of RNA viruses.</title>
        <authorList>
            <person name="Monroe S.S."/>
            <person name="Jiang B."/>
            <person name="Stine S.E."/>
            <person name="Koopmans M."/>
            <person name="Glass R.I."/>
        </authorList>
    </citation>
    <scope>NUCLEOTIDE SEQUENCE [GENOMIC RNA]</scope>
</reference>
<reference key="2">
    <citation type="journal article" date="2020" name="Viruses">
        <title>Protein Disulfide Isomerase A4 Is Involved in Genome Uncoating during Human Astrovirus Cell Entry.</title>
        <authorList>
            <person name="Aguilar-Hernandez N."/>
            <person name="Meyer L."/>
            <person name="Lopez S."/>
            <person name="DuBois R.M."/>
            <person name="Arias C.F."/>
        </authorList>
    </citation>
    <scope>ABSENCE OF INTERACTION WITH HOST PDIA4 (SPIKE PROTEIN VP25)</scope>
    <source>
        <strain>Yuc8</strain>
    </source>
</reference>
<reference key="3">
    <citation type="journal article" date="2023" name="J. Virol.">
        <title>Human astrovirus capsid protein releases a membrane lytic peptide upon trypsin maturation.</title>
        <authorList>
            <person name="Ykema M."/>
            <person name="Ye K."/>
            <person name="Xun M."/>
            <person name="Harper J."/>
            <person name="Betancourt-Solis M.A."/>
            <person name="Arias C.F."/>
            <person name="McNew J.A."/>
            <person name="Tao Y.J."/>
        </authorList>
    </citation>
    <scope>DOMAIN (CAPSID POLYPROTEIN VP70)</scope>
</reference>
<reference evidence="9 10" key="4">
    <citation type="journal article" date="2017" name="J. Virol.">
        <title>Structure of a Human Astrovirus Capsid-Antibody Complex and Mechanistic Insights into Virus Neutralization.</title>
        <authorList>
            <person name="Bogdanoff W.A."/>
            <person name="Campos J."/>
            <person name="Perez E.I."/>
            <person name="Yin L."/>
            <person name="Alexander D.L."/>
            <person name="DuBois R.M."/>
        </authorList>
    </citation>
    <scope>X-RAY CRYSTALLOGRAPHY (1.87 ANGSTROMS) OF 429-644 IN COMPLEX WITH A NEUTRALIZING ANTIBODY</scope>
</reference>
<evidence type="ECO:0000250" key="1">
    <source>
        <dbReference type="UniProtKB" id="O12792"/>
    </source>
</evidence>
<evidence type="ECO:0000250" key="2">
    <source>
        <dbReference type="UniProtKB" id="Q9IFX1"/>
    </source>
</evidence>
<evidence type="ECO:0000255" key="3"/>
<evidence type="ECO:0000256" key="4">
    <source>
        <dbReference type="SAM" id="MobiDB-lite"/>
    </source>
</evidence>
<evidence type="ECO:0000269" key="5">
    <source>
    </source>
</evidence>
<evidence type="ECO:0000269" key="6">
    <source>
    </source>
</evidence>
<evidence type="ECO:0000305" key="7"/>
<evidence type="ECO:0000305" key="8">
    <source>
    </source>
</evidence>
<evidence type="ECO:0007744" key="9">
    <source>
        <dbReference type="PDB" id="5KOU"/>
    </source>
</evidence>
<evidence type="ECO:0007744" key="10">
    <source>
        <dbReference type="PDB" id="5KOV"/>
    </source>
</evidence>
<evidence type="ECO:0007829" key="11">
    <source>
        <dbReference type="PDB" id="5KOU"/>
    </source>
</evidence>
<dbReference type="EMBL" id="L06802">
    <property type="protein sequence ID" value="AAA62427.1"/>
    <property type="molecule type" value="mRNA"/>
</dbReference>
<dbReference type="PIR" id="A45695">
    <property type="entry name" value="A45695"/>
</dbReference>
<dbReference type="PDB" id="5KOU">
    <property type="method" value="X-ray"/>
    <property type="resolution" value="1.87 A"/>
    <property type="chains" value="A/B/C/D=429-644"/>
</dbReference>
<dbReference type="PDB" id="5KOV">
    <property type="method" value="X-ray"/>
    <property type="resolution" value="3.25 A"/>
    <property type="chains" value="A/B/G/H/M/N/S/T=429-644"/>
</dbReference>
<dbReference type="PDB" id="9CN2">
    <property type="method" value="X-ray"/>
    <property type="resolution" value="2.67 A"/>
    <property type="chains" value="A=428-653"/>
</dbReference>
<dbReference type="PDBsum" id="5KOU"/>
<dbReference type="PDBsum" id="5KOV"/>
<dbReference type="PDBsum" id="9CN2"/>
<dbReference type="SMR" id="Q82446"/>
<dbReference type="ABCD" id="Q82446">
    <property type="antibodies" value="1 sequenced antibody"/>
</dbReference>
<dbReference type="GO" id="GO:0043655">
    <property type="term" value="C:host extracellular space"/>
    <property type="evidence" value="ECO:0007669"/>
    <property type="project" value="UniProtKB-SubCell"/>
</dbReference>
<dbReference type="GO" id="GO:0039617">
    <property type="term" value="C:T=3 icosahedral viral capsid"/>
    <property type="evidence" value="ECO:0000250"/>
    <property type="project" value="UniProtKB"/>
</dbReference>
<dbReference type="GO" id="GO:0075512">
    <property type="term" value="P:clathrin-dependent endocytosis of virus by host cell"/>
    <property type="evidence" value="ECO:0000250"/>
    <property type="project" value="UniProtKB"/>
</dbReference>
<dbReference type="FunFam" id="2.60.120.20:FF:000007">
    <property type="entry name" value="Capsid polyprotein VP90"/>
    <property type="match status" value="1"/>
</dbReference>
<dbReference type="Gene3D" id="2.60.120.20">
    <property type="match status" value="1"/>
</dbReference>
<dbReference type="InterPro" id="IPR004337">
    <property type="entry name" value="Astro_capsid_N"/>
</dbReference>
<dbReference type="InterPro" id="IPR022027">
    <property type="entry name" value="Astro_capsid_p"/>
</dbReference>
<dbReference type="InterPro" id="IPR029053">
    <property type="entry name" value="Viral_coat"/>
</dbReference>
<dbReference type="Pfam" id="PF03115">
    <property type="entry name" value="Astro_capsid_N"/>
    <property type="match status" value="1"/>
</dbReference>
<dbReference type="Pfam" id="PF12226">
    <property type="entry name" value="Astro_capsid_p"/>
    <property type="match status" value="1"/>
</dbReference>
<organismHost>
    <name type="scientific">Homo sapiens</name>
    <name type="common">Human</name>
    <dbReference type="NCBI Taxonomy" id="9606"/>
</organismHost>
<keyword id="KW-0002">3D-structure</keyword>
<keyword id="KW-0167">Capsid protein</keyword>
<keyword id="KW-1165">Clathrin-mediated endocytosis of virus by host</keyword>
<keyword id="KW-1142">T=3 icosahedral capsid protein</keyword>
<keyword id="KW-1162">Viral penetration into host cytoplasm</keyword>
<keyword id="KW-0946">Virion</keyword>
<keyword id="KW-1164">Virus endocytosis by host</keyword>
<keyword id="KW-1160">Virus entry into host cell</keyword>
<protein>
    <recommendedName>
        <fullName>Capsid polyprotein VP90</fullName>
    </recommendedName>
    <component>
        <recommendedName>
            <fullName>Capsid polyprotein VP70</fullName>
        </recommendedName>
    </component>
    <component>
        <recommendedName>
            <fullName>Core protein VP34</fullName>
        </recommendedName>
    </component>
    <component>
        <recommendedName>
            <fullName>Spike protein VP27</fullName>
        </recommendedName>
    </component>
    <component>
        <recommendedName>
            <fullName>Spike protein VP25</fullName>
        </recommendedName>
    </component>
</protein>